<name>CYSG_PSYWF</name>
<keyword id="KW-0169">Cobalamin biosynthesis</keyword>
<keyword id="KW-0456">Lyase</keyword>
<keyword id="KW-0489">Methyltransferase</keyword>
<keyword id="KW-0511">Multifunctional enzyme</keyword>
<keyword id="KW-0520">NAD</keyword>
<keyword id="KW-0560">Oxidoreductase</keyword>
<keyword id="KW-0597">Phosphoprotein</keyword>
<keyword id="KW-0627">Porphyrin biosynthesis</keyword>
<keyword id="KW-0949">S-adenosyl-L-methionine</keyword>
<keyword id="KW-0808">Transferase</keyword>
<gene>
    <name evidence="1" type="primary">cysG</name>
    <name type="ordered locus">PsycPRwf_1107</name>
</gene>
<proteinExistence type="inferred from homology"/>
<organism>
    <name type="scientific">Psychrobacter sp. (strain PRwf-1)</name>
    <dbReference type="NCBI Taxonomy" id="349106"/>
    <lineage>
        <taxon>Bacteria</taxon>
        <taxon>Pseudomonadati</taxon>
        <taxon>Pseudomonadota</taxon>
        <taxon>Gammaproteobacteria</taxon>
        <taxon>Moraxellales</taxon>
        <taxon>Moraxellaceae</taxon>
        <taxon>Psychrobacter</taxon>
    </lineage>
</organism>
<evidence type="ECO:0000255" key="1">
    <source>
        <dbReference type="HAMAP-Rule" id="MF_01646"/>
    </source>
</evidence>
<reference key="1">
    <citation type="submission" date="2007-05" db="EMBL/GenBank/DDBJ databases">
        <title>Complete sequence of chromosome of Psychrobacter sp. PRwf-1.</title>
        <authorList>
            <consortium name="US DOE Joint Genome Institute"/>
            <person name="Copeland A."/>
            <person name="Lucas S."/>
            <person name="Lapidus A."/>
            <person name="Barry K."/>
            <person name="Detter J.C."/>
            <person name="Glavina del Rio T."/>
            <person name="Hammon N."/>
            <person name="Israni S."/>
            <person name="Dalin E."/>
            <person name="Tice H."/>
            <person name="Pitluck S."/>
            <person name="Chain P."/>
            <person name="Malfatti S."/>
            <person name="Shin M."/>
            <person name="Vergez L."/>
            <person name="Schmutz J."/>
            <person name="Larimer F."/>
            <person name="Land M."/>
            <person name="Hauser L."/>
            <person name="Kyrpides N."/>
            <person name="Kim E."/>
            <person name="Tiedje J."/>
            <person name="Richardson P."/>
        </authorList>
    </citation>
    <scope>NUCLEOTIDE SEQUENCE [LARGE SCALE GENOMIC DNA]</scope>
    <source>
        <strain>PRwf-1</strain>
    </source>
</reference>
<comment type="function">
    <text evidence="1">Multifunctional enzyme that catalyzes the SAM-dependent methylations of uroporphyrinogen III at position C-2 and C-7 to form precorrin-2 via precorrin-1. Then it catalyzes the NAD-dependent ring dehydrogenation of precorrin-2 to yield sirohydrochlorin. Finally, it catalyzes the ferrochelation of sirohydrochlorin to yield siroheme.</text>
</comment>
<comment type="catalytic activity">
    <reaction evidence="1">
        <text>uroporphyrinogen III + 2 S-adenosyl-L-methionine = precorrin-2 + 2 S-adenosyl-L-homocysteine + H(+)</text>
        <dbReference type="Rhea" id="RHEA:32459"/>
        <dbReference type="ChEBI" id="CHEBI:15378"/>
        <dbReference type="ChEBI" id="CHEBI:57308"/>
        <dbReference type="ChEBI" id="CHEBI:57856"/>
        <dbReference type="ChEBI" id="CHEBI:58827"/>
        <dbReference type="ChEBI" id="CHEBI:59789"/>
        <dbReference type="EC" id="2.1.1.107"/>
    </reaction>
</comment>
<comment type="catalytic activity">
    <reaction evidence="1">
        <text>precorrin-2 + NAD(+) = sirohydrochlorin + NADH + 2 H(+)</text>
        <dbReference type="Rhea" id="RHEA:15613"/>
        <dbReference type="ChEBI" id="CHEBI:15378"/>
        <dbReference type="ChEBI" id="CHEBI:57540"/>
        <dbReference type="ChEBI" id="CHEBI:57945"/>
        <dbReference type="ChEBI" id="CHEBI:58351"/>
        <dbReference type="ChEBI" id="CHEBI:58827"/>
        <dbReference type="EC" id="1.3.1.76"/>
    </reaction>
</comment>
<comment type="catalytic activity">
    <reaction evidence="1">
        <text>siroheme + 2 H(+) = sirohydrochlorin + Fe(2+)</text>
        <dbReference type="Rhea" id="RHEA:24360"/>
        <dbReference type="ChEBI" id="CHEBI:15378"/>
        <dbReference type="ChEBI" id="CHEBI:29033"/>
        <dbReference type="ChEBI" id="CHEBI:58351"/>
        <dbReference type="ChEBI" id="CHEBI:60052"/>
        <dbReference type="EC" id="4.99.1.4"/>
    </reaction>
</comment>
<comment type="pathway">
    <text evidence="1">Cofactor biosynthesis; adenosylcobalamin biosynthesis; precorrin-2 from uroporphyrinogen III: step 1/1.</text>
</comment>
<comment type="pathway">
    <text evidence="1">Cofactor biosynthesis; adenosylcobalamin biosynthesis; sirohydrochlorin from precorrin-2: step 1/1.</text>
</comment>
<comment type="pathway">
    <text evidence="1">Porphyrin-containing compound metabolism; siroheme biosynthesis; precorrin-2 from uroporphyrinogen III: step 1/1.</text>
</comment>
<comment type="pathway">
    <text evidence="1">Porphyrin-containing compound metabolism; siroheme biosynthesis; siroheme from sirohydrochlorin: step 1/1.</text>
</comment>
<comment type="pathway">
    <text evidence="1">Porphyrin-containing compound metabolism; siroheme biosynthesis; sirohydrochlorin from precorrin-2: step 1/1.</text>
</comment>
<comment type="similarity">
    <text evidence="1">In the N-terminal section; belongs to the precorrin-2 dehydrogenase / sirohydrochlorin ferrochelatase family.</text>
</comment>
<comment type="similarity">
    <text evidence="1">In the C-terminal section; belongs to the precorrin methyltransferase family.</text>
</comment>
<sequence>MNTFPLFFKLTNQPVLIVGGGEVAQRKADLLSRAGACITILAPQISQEIHQLLSDERHTLITAHYDKKYIDGKRIVIAGTDDEALNHQVHADCKALNIPVNVVDTPPLCDFIFPAIVDRNPIVIGISSNGKAPVLARLTRARLETLIPQGYGKLAKLAGDMRDEVKSKIPTLTGRRQFWEKAFEGKVSELMFAGRSVEAEQALKQQLEQTHQQLSSNSDVKQADPKSVGEVYIVGAGPGDPELLTFKALRLMQQADIVYYDALVSREVLDLCRRDADKVFVGKKRSNHAVAQQGINQLMIDAASSGKRVVRLKGGDPFVFGRGGEEIQALRAAGIAYQVVPGITAAGAASCYTGIPLTHRDYAQSVRFVTGFLKSGEPNTGFAALTNPNETVIFYMGLHSLERLTKGLMDAGRSPQTPIAIISQASMPTQQVMTGTLADIVAKHEANPLPTPALLIVGEVAKLHDELAWYGEHIVNTDQQAHALNML</sequence>
<accession>A5WEG6</accession>
<dbReference type="EC" id="2.1.1.107" evidence="1"/>
<dbReference type="EC" id="1.3.1.76" evidence="1"/>
<dbReference type="EC" id="4.99.1.4" evidence="1"/>
<dbReference type="EMBL" id="CP000713">
    <property type="protein sequence ID" value="ABQ94057.1"/>
    <property type="molecule type" value="Genomic_DNA"/>
</dbReference>
<dbReference type="SMR" id="A5WEG6"/>
<dbReference type="STRING" id="349106.PsycPRwf_1107"/>
<dbReference type="KEGG" id="prw:PsycPRwf_1107"/>
<dbReference type="eggNOG" id="COG0007">
    <property type="taxonomic scope" value="Bacteria"/>
</dbReference>
<dbReference type="eggNOG" id="COG1648">
    <property type="taxonomic scope" value="Bacteria"/>
</dbReference>
<dbReference type="HOGENOM" id="CLU_011276_2_1_6"/>
<dbReference type="UniPathway" id="UPA00148">
    <property type="reaction ID" value="UER00211"/>
</dbReference>
<dbReference type="UniPathway" id="UPA00148">
    <property type="reaction ID" value="UER00222"/>
</dbReference>
<dbReference type="UniPathway" id="UPA00262">
    <property type="reaction ID" value="UER00211"/>
</dbReference>
<dbReference type="UniPathway" id="UPA00262">
    <property type="reaction ID" value="UER00222"/>
</dbReference>
<dbReference type="UniPathway" id="UPA00262">
    <property type="reaction ID" value="UER00376"/>
</dbReference>
<dbReference type="GO" id="GO:0051287">
    <property type="term" value="F:NAD binding"/>
    <property type="evidence" value="ECO:0007669"/>
    <property type="project" value="InterPro"/>
</dbReference>
<dbReference type="GO" id="GO:0043115">
    <property type="term" value="F:precorrin-2 dehydrogenase activity"/>
    <property type="evidence" value="ECO:0007669"/>
    <property type="project" value="UniProtKB-UniRule"/>
</dbReference>
<dbReference type="GO" id="GO:0051266">
    <property type="term" value="F:sirohydrochlorin ferrochelatase activity"/>
    <property type="evidence" value="ECO:0007669"/>
    <property type="project" value="UniProtKB-EC"/>
</dbReference>
<dbReference type="GO" id="GO:0004851">
    <property type="term" value="F:uroporphyrin-III C-methyltransferase activity"/>
    <property type="evidence" value="ECO:0007669"/>
    <property type="project" value="UniProtKB-UniRule"/>
</dbReference>
<dbReference type="GO" id="GO:0009236">
    <property type="term" value="P:cobalamin biosynthetic process"/>
    <property type="evidence" value="ECO:0007669"/>
    <property type="project" value="UniProtKB-UniRule"/>
</dbReference>
<dbReference type="GO" id="GO:0032259">
    <property type="term" value="P:methylation"/>
    <property type="evidence" value="ECO:0007669"/>
    <property type="project" value="UniProtKB-KW"/>
</dbReference>
<dbReference type="GO" id="GO:0019354">
    <property type="term" value="P:siroheme biosynthetic process"/>
    <property type="evidence" value="ECO:0007669"/>
    <property type="project" value="UniProtKB-UniRule"/>
</dbReference>
<dbReference type="CDD" id="cd11642">
    <property type="entry name" value="SUMT"/>
    <property type="match status" value="1"/>
</dbReference>
<dbReference type="FunFam" id="3.30.950.10:FF:000001">
    <property type="entry name" value="Siroheme synthase"/>
    <property type="match status" value="1"/>
</dbReference>
<dbReference type="FunFam" id="3.40.1010.10:FF:000001">
    <property type="entry name" value="Siroheme synthase"/>
    <property type="match status" value="1"/>
</dbReference>
<dbReference type="Gene3D" id="3.40.1010.10">
    <property type="entry name" value="Cobalt-precorrin-4 Transmethylase, Domain 1"/>
    <property type="match status" value="1"/>
</dbReference>
<dbReference type="Gene3D" id="3.30.950.10">
    <property type="entry name" value="Methyltransferase, Cobalt-precorrin-4 Transmethylase, Domain 2"/>
    <property type="match status" value="1"/>
</dbReference>
<dbReference type="Gene3D" id="3.40.50.720">
    <property type="entry name" value="NAD(P)-binding Rossmann-like Domain"/>
    <property type="match status" value="1"/>
</dbReference>
<dbReference type="Gene3D" id="1.10.8.210">
    <property type="entry name" value="Sirohaem synthase, dimerisation domain"/>
    <property type="match status" value="1"/>
</dbReference>
<dbReference type="Gene3D" id="3.30.160.110">
    <property type="entry name" value="Siroheme synthase, domain 2"/>
    <property type="match status" value="1"/>
</dbReference>
<dbReference type="HAMAP" id="MF_01646">
    <property type="entry name" value="Siroheme_synth"/>
    <property type="match status" value="1"/>
</dbReference>
<dbReference type="InterPro" id="IPR000878">
    <property type="entry name" value="4pyrrol_Mease"/>
</dbReference>
<dbReference type="InterPro" id="IPR035996">
    <property type="entry name" value="4pyrrol_Methylase_sf"/>
</dbReference>
<dbReference type="InterPro" id="IPR014777">
    <property type="entry name" value="4pyrrole_Mease_sub1"/>
</dbReference>
<dbReference type="InterPro" id="IPR014776">
    <property type="entry name" value="4pyrrole_Mease_sub2"/>
</dbReference>
<dbReference type="InterPro" id="IPR006366">
    <property type="entry name" value="CobA/CysG_C"/>
</dbReference>
<dbReference type="InterPro" id="IPR036291">
    <property type="entry name" value="NAD(P)-bd_dom_sf"/>
</dbReference>
<dbReference type="InterPro" id="IPR050161">
    <property type="entry name" value="Siro_Cobalamin_biosynth"/>
</dbReference>
<dbReference type="InterPro" id="IPR037115">
    <property type="entry name" value="Sirohaem_synt_dimer_dom_sf"/>
</dbReference>
<dbReference type="InterPro" id="IPR012409">
    <property type="entry name" value="Sirohaem_synth"/>
</dbReference>
<dbReference type="InterPro" id="IPR028281">
    <property type="entry name" value="Sirohaem_synthase_central"/>
</dbReference>
<dbReference type="InterPro" id="IPR019478">
    <property type="entry name" value="Sirohaem_synthase_dimer_dom"/>
</dbReference>
<dbReference type="InterPro" id="IPR006367">
    <property type="entry name" value="Sirohaem_synthase_N"/>
</dbReference>
<dbReference type="InterPro" id="IPR003043">
    <property type="entry name" value="Uropor_MeTrfase_CS"/>
</dbReference>
<dbReference type="NCBIfam" id="TIGR01469">
    <property type="entry name" value="cobA_cysG_Cterm"/>
    <property type="match status" value="1"/>
</dbReference>
<dbReference type="NCBIfam" id="TIGR01470">
    <property type="entry name" value="cysG_Nterm"/>
    <property type="match status" value="1"/>
</dbReference>
<dbReference type="NCBIfam" id="NF004790">
    <property type="entry name" value="PRK06136.1"/>
    <property type="match status" value="1"/>
</dbReference>
<dbReference type="NCBIfam" id="NF007922">
    <property type="entry name" value="PRK10637.1"/>
    <property type="match status" value="1"/>
</dbReference>
<dbReference type="PANTHER" id="PTHR45790:SF1">
    <property type="entry name" value="SIROHEME SYNTHASE"/>
    <property type="match status" value="1"/>
</dbReference>
<dbReference type="PANTHER" id="PTHR45790">
    <property type="entry name" value="SIROHEME SYNTHASE-RELATED"/>
    <property type="match status" value="1"/>
</dbReference>
<dbReference type="Pfam" id="PF10414">
    <property type="entry name" value="CysG_dimeriser"/>
    <property type="match status" value="1"/>
</dbReference>
<dbReference type="Pfam" id="PF13241">
    <property type="entry name" value="NAD_binding_7"/>
    <property type="match status" value="1"/>
</dbReference>
<dbReference type="Pfam" id="PF14824">
    <property type="entry name" value="Sirohm_synth_M"/>
    <property type="match status" value="1"/>
</dbReference>
<dbReference type="Pfam" id="PF00590">
    <property type="entry name" value="TP_methylase"/>
    <property type="match status" value="1"/>
</dbReference>
<dbReference type="PIRSF" id="PIRSF036426">
    <property type="entry name" value="Sirohaem_synth"/>
    <property type="match status" value="1"/>
</dbReference>
<dbReference type="SUPFAM" id="SSF51735">
    <property type="entry name" value="NAD(P)-binding Rossmann-fold domains"/>
    <property type="match status" value="1"/>
</dbReference>
<dbReference type="SUPFAM" id="SSF75615">
    <property type="entry name" value="Siroheme synthase middle domains-like"/>
    <property type="match status" value="1"/>
</dbReference>
<dbReference type="SUPFAM" id="SSF53790">
    <property type="entry name" value="Tetrapyrrole methylase"/>
    <property type="match status" value="1"/>
</dbReference>
<dbReference type="PROSITE" id="PS00840">
    <property type="entry name" value="SUMT_2"/>
    <property type="match status" value="1"/>
</dbReference>
<feature type="chain" id="PRO_0000330548" description="Siroheme synthase">
    <location>
        <begin position="1"/>
        <end position="487"/>
    </location>
</feature>
<feature type="region of interest" description="Precorrin-2 dehydrogenase /sirohydrochlorin ferrochelatase" evidence="1">
    <location>
        <begin position="1"/>
        <end position="203"/>
    </location>
</feature>
<feature type="region of interest" description="Uroporphyrinogen-III C-methyltransferase" evidence="1">
    <location>
        <begin position="229"/>
        <end position="487"/>
    </location>
</feature>
<feature type="active site" description="Proton acceptor" evidence="1">
    <location>
        <position position="261"/>
    </location>
</feature>
<feature type="active site" description="Proton donor" evidence="1">
    <location>
        <position position="283"/>
    </location>
</feature>
<feature type="binding site" evidence="1">
    <location>
        <begin position="22"/>
        <end position="23"/>
    </location>
    <ligand>
        <name>NAD(+)</name>
        <dbReference type="ChEBI" id="CHEBI:57540"/>
    </ligand>
</feature>
<feature type="binding site" evidence="1">
    <location>
        <begin position="43"/>
        <end position="44"/>
    </location>
    <ligand>
        <name>NAD(+)</name>
        <dbReference type="ChEBI" id="CHEBI:57540"/>
    </ligand>
</feature>
<feature type="binding site" evidence="1">
    <location>
        <position position="238"/>
    </location>
    <ligand>
        <name>S-adenosyl-L-methionine</name>
        <dbReference type="ChEBI" id="CHEBI:59789"/>
    </ligand>
</feature>
<feature type="binding site" evidence="1">
    <location>
        <begin position="314"/>
        <end position="316"/>
    </location>
    <ligand>
        <name>S-adenosyl-L-methionine</name>
        <dbReference type="ChEBI" id="CHEBI:59789"/>
    </ligand>
</feature>
<feature type="binding site" evidence="1">
    <location>
        <position position="319"/>
    </location>
    <ligand>
        <name>S-adenosyl-L-methionine</name>
        <dbReference type="ChEBI" id="CHEBI:59789"/>
    </ligand>
</feature>
<feature type="binding site" evidence="1">
    <location>
        <begin position="344"/>
        <end position="345"/>
    </location>
    <ligand>
        <name>S-adenosyl-L-methionine</name>
        <dbReference type="ChEBI" id="CHEBI:59789"/>
    </ligand>
</feature>
<feature type="binding site" evidence="1">
    <location>
        <position position="396"/>
    </location>
    <ligand>
        <name>S-adenosyl-L-methionine</name>
        <dbReference type="ChEBI" id="CHEBI:59789"/>
    </ligand>
</feature>
<feature type="binding site" evidence="1">
    <location>
        <position position="425"/>
    </location>
    <ligand>
        <name>S-adenosyl-L-methionine</name>
        <dbReference type="ChEBI" id="CHEBI:59789"/>
    </ligand>
</feature>
<feature type="modified residue" description="Phosphoserine" evidence="1">
    <location>
        <position position="128"/>
    </location>
</feature>
<protein>
    <recommendedName>
        <fullName evidence="1">Siroheme synthase</fullName>
    </recommendedName>
    <domain>
        <recommendedName>
            <fullName evidence="1">Uroporphyrinogen-III C-methyltransferase</fullName>
            <shortName evidence="1">Urogen III methylase</shortName>
            <ecNumber evidence="1">2.1.1.107</ecNumber>
        </recommendedName>
        <alternativeName>
            <fullName evidence="1">SUMT</fullName>
        </alternativeName>
        <alternativeName>
            <fullName evidence="1">Uroporphyrinogen III methylase</fullName>
            <shortName evidence="1">UROM</shortName>
        </alternativeName>
    </domain>
    <domain>
        <recommendedName>
            <fullName evidence="1">Precorrin-2 dehydrogenase</fullName>
            <ecNumber evidence="1">1.3.1.76</ecNumber>
        </recommendedName>
    </domain>
    <domain>
        <recommendedName>
            <fullName evidence="1">Sirohydrochlorin ferrochelatase</fullName>
            <ecNumber evidence="1">4.99.1.4</ecNumber>
        </recommendedName>
    </domain>
</protein>